<keyword id="KW-0012">Acyltransferase</keyword>
<keyword id="KW-0284">Flavonoid biosynthesis</keyword>
<keyword id="KW-1185">Reference proteome</keyword>
<keyword id="KW-0808">Transferase</keyword>
<name>CHS1_SOLLC</name>
<reference key="1">
    <citation type="journal article" date="1990" name="Mol. Gen. Genet.">
        <title>Molecular genetic analysis of chalcone synthase in Lycopersicon esculentum and an anthocyanin-deficient mutant.</title>
        <authorList>
            <person name="O'Neill S.D."/>
            <person name="Tong Y."/>
            <person name="Spoerlein B."/>
            <person name="Forkmann G."/>
            <person name="Yoder J.I."/>
        </authorList>
    </citation>
    <scope>NUCLEOTIDE SEQUENCE [MRNA]</scope>
    <source>
        <tissue>Cotyledon</tissue>
        <tissue>Hypocotyl</tissue>
        <tissue>Leaf</tissue>
    </source>
</reference>
<feature type="chain" id="PRO_0000216001" description="Chalcone synthase 1">
    <location>
        <begin position="1"/>
        <end position="389"/>
    </location>
</feature>
<feature type="active site" evidence="1">
    <location>
        <position position="164"/>
    </location>
</feature>
<comment type="function">
    <text>The primary product of this enzyme is 4,2',4',6'-tetrahydroxychalcone (also termed naringenin-chalcone or chalcone) which can under specific conditions spontaneously isomerize into naringenin.</text>
</comment>
<comment type="catalytic activity">
    <reaction evidence="1">
        <text>(E)-4-coumaroyl-CoA + 3 malonyl-CoA + 3 H(+) = 2',4,4',6'-tetrahydroxychalcone + 3 CO2 + 4 CoA</text>
        <dbReference type="Rhea" id="RHEA:11128"/>
        <dbReference type="ChEBI" id="CHEBI:15378"/>
        <dbReference type="ChEBI" id="CHEBI:15413"/>
        <dbReference type="ChEBI" id="CHEBI:16526"/>
        <dbReference type="ChEBI" id="CHEBI:57287"/>
        <dbReference type="ChEBI" id="CHEBI:57384"/>
        <dbReference type="ChEBI" id="CHEBI:85008"/>
        <dbReference type="EC" id="2.3.1.74"/>
    </reaction>
</comment>
<comment type="pathway">
    <text>Secondary metabolite biosynthesis; flavonoid biosynthesis.</text>
</comment>
<comment type="similarity">
    <text evidence="2">Belongs to the thiolase-like superfamily. Chalcone/stilbene synthases family.</text>
</comment>
<protein>
    <recommendedName>
        <fullName>Chalcone synthase 1</fullName>
        <ecNumber>2.3.1.74</ecNumber>
    </recommendedName>
    <alternativeName>
        <fullName>Naringenin-chalcone synthase 1</fullName>
    </alternativeName>
</protein>
<gene>
    <name type="primary">CHS1</name>
</gene>
<proteinExistence type="evidence at transcript level"/>
<organism>
    <name type="scientific">Solanum lycopersicum</name>
    <name type="common">Tomato</name>
    <name type="synonym">Lycopersicon esculentum</name>
    <dbReference type="NCBI Taxonomy" id="4081"/>
    <lineage>
        <taxon>Eukaryota</taxon>
        <taxon>Viridiplantae</taxon>
        <taxon>Streptophyta</taxon>
        <taxon>Embryophyta</taxon>
        <taxon>Tracheophyta</taxon>
        <taxon>Spermatophyta</taxon>
        <taxon>Magnoliopsida</taxon>
        <taxon>eudicotyledons</taxon>
        <taxon>Gunneridae</taxon>
        <taxon>Pentapetalae</taxon>
        <taxon>asterids</taxon>
        <taxon>lamiids</taxon>
        <taxon>Solanales</taxon>
        <taxon>Solanaceae</taxon>
        <taxon>Solanoideae</taxon>
        <taxon>Solaneae</taxon>
        <taxon>Solanum</taxon>
        <taxon>Solanum subgen. Lycopersicon</taxon>
    </lineage>
</organism>
<accession>P23418</accession>
<dbReference type="EC" id="2.3.1.74"/>
<dbReference type="EMBL" id="X55194">
    <property type="protein sequence ID" value="CAA38980.1"/>
    <property type="molecule type" value="mRNA"/>
</dbReference>
<dbReference type="PIR" id="S12223">
    <property type="entry name" value="S12223"/>
</dbReference>
<dbReference type="SMR" id="P23418"/>
<dbReference type="FunCoup" id="P23418">
    <property type="interactions" value="47"/>
</dbReference>
<dbReference type="STRING" id="4081.P23418"/>
<dbReference type="PaxDb" id="4081-Solyc09g091510.2.1"/>
<dbReference type="eggNOG" id="ENOG502QRSY">
    <property type="taxonomic scope" value="Eukaryota"/>
</dbReference>
<dbReference type="InParanoid" id="P23418"/>
<dbReference type="UniPathway" id="UPA00154"/>
<dbReference type="Proteomes" id="UP000004994">
    <property type="component" value="Unplaced"/>
</dbReference>
<dbReference type="ExpressionAtlas" id="P23418">
    <property type="expression patterns" value="baseline and differential"/>
</dbReference>
<dbReference type="GO" id="GO:0016747">
    <property type="term" value="F:acyltransferase activity, transferring groups other than amino-acyl groups"/>
    <property type="evidence" value="ECO:0000318"/>
    <property type="project" value="GO_Central"/>
</dbReference>
<dbReference type="GO" id="GO:0016210">
    <property type="term" value="F:naringenin-chalcone synthase activity"/>
    <property type="evidence" value="ECO:0007669"/>
    <property type="project" value="UniProtKB-EC"/>
</dbReference>
<dbReference type="GO" id="GO:0009813">
    <property type="term" value="P:flavonoid biosynthetic process"/>
    <property type="evidence" value="ECO:0007669"/>
    <property type="project" value="UniProtKB-UniPathway"/>
</dbReference>
<dbReference type="GO" id="GO:0030639">
    <property type="term" value="P:polyketide biosynthetic process"/>
    <property type="evidence" value="ECO:0000318"/>
    <property type="project" value="GO_Central"/>
</dbReference>
<dbReference type="CDD" id="cd00831">
    <property type="entry name" value="CHS_like"/>
    <property type="match status" value="1"/>
</dbReference>
<dbReference type="FunFam" id="3.40.47.10:FF:000014">
    <property type="entry name" value="Chalcone synthase 1"/>
    <property type="match status" value="1"/>
</dbReference>
<dbReference type="FunFam" id="3.40.47.10:FF:000025">
    <property type="entry name" value="Chalcone synthase 2"/>
    <property type="match status" value="1"/>
</dbReference>
<dbReference type="Gene3D" id="3.40.47.10">
    <property type="match status" value="2"/>
</dbReference>
<dbReference type="InterPro" id="IPR012328">
    <property type="entry name" value="Chalcone/stilbene_synt_C"/>
</dbReference>
<dbReference type="InterPro" id="IPR001099">
    <property type="entry name" value="Chalcone/stilbene_synt_N"/>
</dbReference>
<dbReference type="InterPro" id="IPR018088">
    <property type="entry name" value="Chalcone/stilbene_synthase_AS"/>
</dbReference>
<dbReference type="InterPro" id="IPR011141">
    <property type="entry name" value="Polyketide_synthase_type-III"/>
</dbReference>
<dbReference type="InterPro" id="IPR016039">
    <property type="entry name" value="Thiolase-like"/>
</dbReference>
<dbReference type="PANTHER" id="PTHR11877:SF80">
    <property type="entry name" value="CHALCONE SYNTHASE 1"/>
    <property type="match status" value="1"/>
</dbReference>
<dbReference type="PANTHER" id="PTHR11877">
    <property type="entry name" value="HYDROXYMETHYLGLUTARYL-COA SYNTHASE"/>
    <property type="match status" value="1"/>
</dbReference>
<dbReference type="Pfam" id="PF02797">
    <property type="entry name" value="Chal_sti_synt_C"/>
    <property type="match status" value="1"/>
</dbReference>
<dbReference type="Pfam" id="PF00195">
    <property type="entry name" value="Chal_sti_synt_N"/>
    <property type="match status" value="1"/>
</dbReference>
<dbReference type="PIRSF" id="PIRSF000451">
    <property type="entry name" value="PKS_III"/>
    <property type="match status" value="1"/>
</dbReference>
<dbReference type="SUPFAM" id="SSF53901">
    <property type="entry name" value="Thiolase-like"/>
    <property type="match status" value="2"/>
</dbReference>
<dbReference type="PROSITE" id="PS00441">
    <property type="entry name" value="CHALCONE_SYNTH"/>
    <property type="match status" value="1"/>
</dbReference>
<evidence type="ECO:0000255" key="1">
    <source>
        <dbReference type="PROSITE-ProRule" id="PRU10023"/>
    </source>
</evidence>
<evidence type="ECO:0000305" key="2"/>
<sequence>MVTVEEYRKAQRAEGPATILAIGTSTPSNCVDQSTYPDYYFRITNSEHKTELKEKFKRMCDKSMIKKRYMHLTEEILKENPNMCAYMAPSLDARQDIVVVEVPKLGKRGTQKAIKEWGQPKSKITHLVFCTTSGVDMPACDYQLAKLLPVRPSVKRLMMYQQGCFAGGTVLRLAKDLAENNKGARVLVVCSEITAVTFRGPSESHLDSLVGQALFGDGAAAIIIGSDPIIGVERPLFELVSAAQTLVPDSEGAIDGHLREVGLTFHLLKDVPGLISKNIEKSLLEAFQPLGISDWNSLFWIAHPGGPAILDQVELKLGLKPEKLRATREVLSNYGNMSSACVLFILDEMRKASTKEGLGTTGEGLEWGVLFGFGPGLTVETVVLHSVAA</sequence>